<comment type="function">
    <text evidence="1 3">Member of the two-component regulatory system WalK/WalR that regulates genes involved in cell wall metabolism, virulence regulation, biofilm production, oxidative stress resistance and antibiotic resistance via direct or indirect regulation of autolysins (By similarity). Functions as a transcription regulator by direct binding to promoter regions (By similarity).</text>
</comment>
<comment type="subcellular location">
    <subcellularLocation>
        <location evidence="6">Cytoplasm</location>
    </subcellularLocation>
</comment>
<comment type="PTM">
    <text evidence="2 3">Phosphorylated by WalK on Asp-53 (By similarity). Phosphorylated by PknB on Thr-101 (By similarity).</text>
</comment>
<comment type="sequence caution" evidence="6">
    <conflict type="erroneous initiation">
        <sequence resource="EMBL-CDS" id="BAF76901"/>
    </conflict>
</comment>
<protein>
    <recommendedName>
        <fullName evidence="6">Transcriptional regulatory protein WalR</fullName>
    </recommendedName>
</protein>
<organism>
    <name type="scientific">Staphylococcus aureus (strain Mu3 / ATCC 700698)</name>
    <dbReference type="NCBI Taxonomy" id="418127"/>
    <lineage>
        <taxon>Bacteria</taxon>
        <taxon>Bacillati</taxon>
        <taxon>Bacillota</taxon>
        <taxon>Bacilli</taxon>
        <taxon>Bacillales</taxon>
        <taxon>Staphylococcaceae</taxon>
        <taxon>Staphylococcus</taxon>
    </lineage>
</organism>
<sequence>MARKVVVVDDEKPIADILEFNLKKEGYDVYCAYDGNDAVDLIYEEEPDIVLLDIMLPGRDGMEVCREVRKKYEMPIIMLTAKDSEIDKVLGLELGADDYVTKPFSTRELIARVKANLRRHYSQPAQDTGNVTNEITIKDIVIYPDAYSIKKRGEDIELTHREFELFHYLSKHMGQVMTREHLLQTVWGYDYFGDVRTVDVTIRRLREKIEDDPSHPEYIVTRRGVGYFLQQHE</sequence>
<accession>A7WWQ5</accession>
<feature type="chain" id="PRO_0000353038" description="Transcriptional regulatory protein WalR">
    <location>
        <begin position="1"/>
        <end position="233"/>
    </location>
</feature>
<feature type="domain" description="Response regulatory" evidence="4">
    <location>
        <begin position="4"/>
        <end position="117"/>
    </location>
</feature>
<feature type="DNA-binding region" description="OmpR/PhoB-type" evidence="5">
    <location>
        <begin position="132"/>
        <end position="231"/>
    </location>
</feature>
<feature type="modified residue" description="4-aspartylphosphate" evidence="4">
    <location>
        <position position="53"/>
    </location>
</feature>
<feature type="modified residue" description="Phosphothreonine" evidence="2">
    <location>
        <position position="101"/>
    </location>
</feature>
<dbReference type="EMBL" id="AP009324">
    <property type="protein sequence ID" value="BAF76901.1"/>
    <property type="status" value="ALT_INIT"/>
    <property type="molecule type" value="Genomic_DNA"/>
</dbReference>
<dbReference type="SMR" id="A7WWQ5"/>
<dbReference type="KEGG" id="saw:SAHV_0018"/>
<dbReference type="HOGENOM" id="CLU_000445_30_4_9"/>
<dbReference type="GO" id="GO:0005829">
    <property type="term" value="C:cytosol"/>
    <property type="evidence" value="ECO:0007669"/>
    <property type="project" value="TreeGrafter"/>
</dbReference>
<dbReference type="GO" id="GO:0032993">
    <property type="term" value="C:protein-DNA complex"/>
    <property type="evidence" value="ECO:0007669"/>
    <property type="project" value="TreeGrafter"/>
</dbReference>
<dbReference type="GO" id="GO:0000156">
    <property type="term" value="F:phosphorelay response regulator activity"/>
    <property type="evidence" value="ECO:0007669"/>
    <property type="project" value="TreeGrafter"/>
</dbReference>
<dbReference type="GO" id="GO:0000976">
    <property type="term" value="F:transcription cis-regulatory region binding"/>
    <property type="evidence" value="ECO:0007669"/>
    <property type="project" value="TreeGrafter"/>
</dbReference>
<dbReference type="GO" id="GO:0006355">
    <property type="term" value="P:regulation of DNA-templated transcription"/>
    <property type="evidence" value="ECO:0007669"/>
    <property type="project" value="InterPro"/>
</dbReference>
<dbReference type="CDD" id="cd17614">
    <property type="entry name" value="REC_OmpR_YycF-like"/>
    <property type="match status" value="1"/>
</dbReference>
<dbReference type="CDD" id="cd00383">
    <property type="entry name" value="trans_reg_C"/>
    <property type="match status" value="1"/>
</dbReference>
<dbReference type="FunFam" id="1.10.10.10:FF:000089">
    <property type="entry name" value="Alkaline phosphatase synthesis response regulator"/>
    <property type="match status" value="1"/>
</dbReference>
<dbReference type="FunFam" id="3.40.50.2300:FF:000052">
    <property type="entry name" value="DNA-binding response regulator YycF"/>
    <property type="match status" value="1"/>
</dbReference>
<dbReference type="Gene3D" id="3.40.50.2300">
    <property type="match status" value="1"/>
</dbReference>
<dbReference type="Gene3D" id="6.10.250.690">
    <property type="match status" value="1"/>
</dbReference>
<dbReference type="Gene3D" id="1.10.10.10">
    <property type="entry name" value="Winged helix-like DNA-binding domain superfamily/Winged helix DNA-binding domain"/>
    <property type="match status" value="1"/>
</dbReference>
<dbReference type="InterPro" id="IPR011006">
    <property type="entry name" value="CheY-like_superfamily"/>
</dbReference>
<dbReference type="InterPro" id="IPR001867">
    <property type="entry name" value="OmpR/PhoB-type_DNA-bd"/>
</dbReference>
<dbReference type="InterPro" id="IPR047791">
    <property type="entry name" value="Resp_reg_WalR"/>
</dbReference>
<dbReference type="InterPro" id="IPR016032">
    <property type="entry name" value="Sig_transdc_resp-reg_C-effctor"/>
</dbReference>
<dbReference type="InterPro" id="IPR001789">
    <property type="entry name" value="Sig_transdc_resp-reg_receiver"/>
</dbReference>
<dbReference type="InterPro" id="IPR039420">
    <property type="entry name" value="WalR-like"/>
</dbReference>
<dbReference type="InterPro" id="IPR036388">
    <property type="entry name" value="WH-like_DNA-bd_sf"/>
</dbReference>
<dbReference type="NCBIfam" id="NF040534">
    <property type="entry name" value="resp_reg_YycF"/>
    <property type="match status" value="1"/>
</dbReference>
<dbReference type="PANTHER" id="PTHR48111:SF40">
    <property type="entry name" value="PHOSPHATE REGULON TRANSCRIPTIONAL REGULATORY PROTEIN PHOB"/>
    <property type="match status" value="1"/>
</dbReference>
<dbReference type="PANTHER" id="PTHR48111">
    <property type="entry name" value="REGULATOR OF RPOS"/>
    <property type="match status" value="1"/>
</dbReference>
<dbReference type="Pfam" id="PF00072">
    <property type="entry name" value="Response_reg"/>
    <property type="match status" value="1"/>
</dbReference>
<dbReference type="Pfam" id="PF00486">
    <property type="entry name" value="Trans_reg_C"/>
    <property type="match status" value="1"/>
</dbReference>
<dbReference type="SMART" id="SM00448">
    <property type="entry name" value="REC"/>
    <property type="match status" value="1"/>
</dbReference>
<dbReference type="SMART" id="SM00862">
    <property type="entry name" value="Trans_reg_C"/>
    <property type="match status" value="1"/>
</dbReference>
<dbReference type="SUPFAM" id="SSF46894">
    <property type="entry name" value="C-terminal effector domain of the bipartite response regulators"/>
    <property type="match status" value="1"/>
</dbReference>
<dbReference type="SUPFAM" id="SSF52172">
    <property type="entry name" value="CheY-like"/>
    <property type="match status" value="1"/>
</dbReference>
<dbReference type="PROSITE" id="PS51755">
    <property type="entry name" value="OMPR_PHOB"/>
    <property type="match status" value="1"/>
</dbReference>
<dbReference type="PROSITE" id="PS50110">
    <property type="entry name" value="RESPONSE_REGULATORY"/>
    <property type="match status" value="1"/>
</dbReference>
<proteinExistence type="inferred from homology"/>
<reference key="1">
    <citation type="journal article" date="2008" name="Antimicrob. Agents Chemother.">
        <title>Mutated response regulator graR is responsible for phenotypic conversion of Staphylococcus aureus from heterogeneous vancomycin-intermediate resistance to vancomycin-intermediate resistance.</title>
        <authorList>
            <person name="Neoh H.-M."/>
            <person name="Cui L."/>
            <person name="Yuzawa H."/>
            <person name="Takeuchi F."/>
            <person name="Matsuo M."/>
            <person name="Hiramatsu K."/>
        </authorList>
    </citation>
    <scope>NUCLEOTIDE SEQUENCE [LARGE SCALE GENOMIC DNA]</scope>
    <source>
        <strain>Mu3 / ATCC 700698</strain>
    </source>
</reference>
<gene>
    <name type="primary">walR</name>
    <name type="synonym">vicR</name>
    <name type="ordered locus">SAHV_0018</name>
</gene>
<name>WALR_STAA1</name>
<keyword id="KW-0010">Activator</keyword>
<keyword id="KW-0963">Cytoplasm</keyword>
<keyword id="KW-0238">DNA-binding</keyword>
<keyword id="KW-0597">Phosphoprotein</keyword>
<keyword id="KW-0804">Transcription</keyword>
<keyword id="KW-0805">Transcription regulation</keyword>
<keyword id="KW-0902">Two-component regulatory system</keyword>
<evidence type="ECO:0000250" key="1">
    <source>
        <dbReference type="UniProtKB" id="Q2G2U6"/>
    </source>
</evidence>
<evidence type="ECO:0000250" key="2">
    <source>
        <dbReference type="UniProtKB" id="Q7A8E1"/>
    </source>
</evidence>
<evidence type="ECO:0000250" key="3">
    <source>
        <dbReference type="UniProtKB" id="Q9RDT5"/>
    </source>
</evidence>
<evidence type="ECO:0000255" key="4">
    <source>
        <dbReference type="PROSITE-ProRule" id="PRU00169"/>
    </source>
</evidence>
<evidence type="ECO:0000255" key="5">
    <source>
        <dbReference type="PROSITE-ProRule" id="PRU01091"/>
    </source>
</evidence>
<evidence type="ECO:0000305" key="6"/>